<comment type="function">
    <text>Associated with the oxygen-evolving complex of photosystem II.</text>
</comment>
<comment type="subcellular location">
    <subcellularLocation>
        <location>Plastid</location>
        <location>Chloroplast thylakoid membrane</location>
    </subcellularLocation>
    <text>Associated with the photosystem II complex.</text>
</comment>
<comment type="similarity">
    <text evidence="1">Belongs to the psbR family.</text>
</comment>
<sequence length="24" mass="2339">SGGKKIKVDKPLGLGGGLTVDIDA</sequence>
<name>PSBR_WHEAT</name>
<protein>
    <recommendedName>
        <fullName>Photosystem II 10 kDa polypeptide</fullName>
    </recommendedName>
</protein>
<accession>P12358</accession>
<organism>
    <name type="scientific">Triticum aestivum</name>
    <name type="common">Wheat</name>
    <dbReference type="NCBI Taxonomy" id="4565"/>
    <lineage>
        <taxon>Eukaryota</taxon>
        <taxon>Viridiplantae</taxon>
        <taxon>Streptophyta</taxon>
        <taxon>Embryophyta</taxon>
        <taxon>Tracheophyta</taxon>
        <taxon>Spermatophyta</taxon>
        <taxon>Magnoliopsida</taxon>
        <taxon>Liliopsida</taxon>
        <taxon>Poales</taxon>
        <taxon>Poaceae</taxon>
        <taxon>BOP clade</taxon>
        <taxon>Pooideae</taxon>
        <taxon>Triticodae</taxon>
        <taxon>Triticeae</taxon>
        <taxon>Triticinae</taxon>
        <taxon>Triticum</taxon>
    </lineage>
</organism>
<dbReference type="PIR" id="S02073">
    <property type="entry name" value="S02073"/>
</dbReference>
<dbReference type="STRING" id="4565.P12358"/>
<dbReference type="PaxDb" id="4565-Traes_6AL_B393E6BCC.2"/>
<dbReference type="eggNOG" id="ENOG502RZG6">
    <property type="taxonomic scope" value="Eukaryota"/>
</dbReference>
<dbReference type="Proteomes" id="UP000019116">
    <property type="component" value="Unplaced"/>
</dbReference>
<dbReference type="GO" id="GO:0009535">
    <property type="term" value="C:chloroplast thylakoid membrane"/>
    <property type="evidence" value="ECO:0007669"/>
    <property type="project" value="UniProtKB-SubCell"/>
</dbReference>
<dbReference type="GO" id="GO:0009523">
    <property type="term" value="C:photosystem II"/>
    <property type="evidence" value="ECO:0007669"/>
    <property type="project" value="UniProtKB-KW"/>
</dbReference>
<dbReference type="GO" id="GO:0015979">
    <property type="term" value="P:photosynthesis"/>
    <property type="evidence" value="ECO:0007669"/>
    <property type="project" value="UniProtKB-KW"/>
</dbReference>
<evidence type="ECO:0000305" key="1"/>
<gene>
    <name type="primary">PSBR</name>
</gene>
<feature type="chain" id="PRO_0000207778" description="Photosystem II 10 kDa polypeptide">
    <location>
        <begin position="1"/>
        <end position="24" status="greater than"/>
    </location>
</feature>
<feature type="non-terminal residue">
    <location>
        <position position="24"/>
    </location>
</feature>
<keyword id="KW-0150">Chloroplast</keyword>
<keyword id="KW-0903">Direct protein sequencing</keyword>
<keyword id="KW-0472">Membrane</keyword>
<keyword id="KW-0602">Photosynthesis</keyword>
<keyword id="KW-0604">Photosystem II</keyword>
<keyword id="KW-0934">Plastid</keyword>
<keyword id="KW-1185">Reference proteome</keyword>
<keyword id="KW-0793">Thylakoid</keyword>
<reference key="1">
    <citation type="journal article" date="1989" name="FEBS Lett.">
        <title>A 10 kDa polypeptide associated with the oxygen-evolving complex of photosystem II has a putative C-terminal non-cleavable thylakoid transfer domain.</title>
        <authorList>
            <person name="Webber A.N."/>
            <person name="Packman L.C."/>
            <person name="Gray J.C."/>
        </authorList>
    </citation>
    <scope>PROTEIN SEQUENCE</scope>
</reference>
<proteinExistence type="evidence at protein level"/>